<dbReference type="EC" id="4.1.3.4" evidence="2"/>
<dbReference type="EMBL" id="CR859448">
    <property type="protein sequence ID" value="CAH91619.1"/>
    <property type="molecule type" value="mRNA"/>
</dbReference>
<dbReference type="RefSeq" id="NP_001127443.1">
    <property type="nucleotide sequence ID" value="NM_001133971.1"/>
</dbReference>
<dbReference type="SMR" id="Q5R9E1"/>
<dbReference type="FunCoup" id="Q5R9E1">
    <property type="interactions" value="1326"/>
</dbReference>
<dbReference type="STRING" id="9601.ENSPPYP00000002003"/>
<dbReference type="GeneID" id="100174514"/>
<dbReference type="KEGG" id="pon:100174514"/>
<dbReference type="CTD" id="3155"/>
<dbReference type="InParanoid" id="Q5R9E1"/>
<dbReference type="OrthoDB" id="1905920at2759"/>
<dbReference type="UniPathway" id="UPA00896">
    <property type="reaction ID" value="UER00863"/>
</dbReference>
<dbReference type="Proteomes" id="UP000001595">
    <property type="component" value="Unplaced"/>
</dbReference>
<dbReference type="GO" id="GO:0005759">
    <property type="term" value="C:mitochondrial matrix"/>
    <property type="evidence" value="ECO:0007669"/>
    <property type="project" value="UniProtKB-SubCell"/>
</dbReference>
<dbReference type="GO" id="GO:0005777">
    <property type="term" value="C:peroxisome"/>
    <property type="evidence" value="ECO:0007669"/>
    <property type="project" value="UniProtKB-SubCell"/>
</dbReference>
<dbReference type="GO" id="GO:0004419">
    <property type="term" value="F:hydroxymethylglutaryl-CoA lyase activity"/>
    <property type="evidence" value="ECO:0000250"/>
    <property type="project" value="UniProtKB"/>
</dbReference>
<dbReference type="GO" id="GO:0046872">
    <property type="term" value="F:metal ion binding"/>
    <property type="evidence" value="ECO:0000250"/>
    <property type="project" value="UniProtKB"/>
</dbReference>
<dbReference type="GO" id="GO:0046951">
    <property type="term" value="P:ketone body biosynthetic process"/>
    <property type="evidence" value="ECO:0000250"/>
    <property type="project" value="UniProtKB"/>
</dbReference>
<dbReference type="GO" id="GO:0006552">
    <property type="term" value="P:L-leucine catabolic process"/>
    <property type="evidence" value="ECO:0007669"/>
    <property type="project" value="TreeGrafter"/>
</dbReference>
<dbReference type="CDD" id="cd07938">
    <property type="entry name" value="DRE_TIM_HMGL"/>
    <property type="match status" value="1"/>
</dbReference>
<dbReference type="FunFam" id="3.20.20.70:FF:000038">
    <property type="entry name" value="Hydroxymethylglutaryl-CoA lyase, mitochondrial"/>
    <property type="match status" value="1"/>
</dbReference>
<dbReference type="Gene3D" id="3.20.20.70">
    <property type="entry name" value="Aldolase class I"/>
    <property type="match status" value="1"/>
</dbReference>
<dbReference type="InterPro" id="IPR013785">
    <property type="entry name" value="Aldolase_TIM"/>
</dbReference>
<dbReference type="InterPro" id="IPR000138">
    <property type="entry name" value="HMG_CoA_lyase_AS"/>
</dbReference>
<dbReference type="InterPro" id="IPR043594">
    <property type="entry name" value="HMGL"/>
</dbReference>
<dbReference type="InterPro" id="IPR000891">
    <property type="entry name" value="PYR_CT"/>
</dbReference>
<dbReference type="NCBIfam" id="NF004283">
    <property type="entry name" value="PRK05692.1"/>
    <property type="match status" value="1"/>
</dbReference>
<dbReference type="PANTHER" id="PTHR42738">
    <property type="entry name" value="HYDROXYMETHYLGLUTARYL-COA LYASE"/>
    <property type="match status" value="1"/>
</dbReference>
<dbReference type="PANTHER" id="PTHR42738:SF1">
    <property type="entry name" value="HYDROXYMETHYLGLUTARYL-COA LYASE, MITOCHONDRIAL"/>
    <property type="match status" value="1"/>
</dbReference>
<dbReference type="Pfam" id="PF00682">
    <property type="entry name" value="HMGL-like"/>
    <property type="match status" value="1"/>
</dbReference>
<dbReference type="SUPFAM" id="SSF51569">
    <property type="entry name" value="Aldolase"/>
    <property type="match status" value="1"/>
</dbReference>
<dbReference type="PROSITE" id="PS01062">
    <property type="entry name" value="HMG_COA_LYASE"/>
    <property type="match status" value="1"/>
</dbReference>
<dbReference type="PROSITE" id="PS50991">
    <property type="entry name" value="PYR_CT"/>
    <property type="match status" value="1"/>
</dbReference>
<organism>
    <name type="scientific">Pongo abelii</name>
    <name type="common">Sumatran orangutan</name>
    <name type="synonym">Pongo pygmaeus abelii</name>
    <dbReference type="NCBI Taxonomy" id="9601"/>
    <lineage>
        <taxon>Eukaryota</taxon>
        <taxon>Metazoa</taxon>
        <taxon>Chordata</taxon>
        <taxon>Craniata</taxon>
        <taxon>Vertebrata</taxon>
        <taxon>Euteleostomi</taxon>
        <taxon>Mammalia</taxon>
        <taxon>Eutheria</taxon>
        <taxon>Euarchontoglires</taxon>
        <taxon>Primates</taxon>
        <taxon>Haplorrhini</taxon>
        <taxon>Catarrhini</taxon>
        <taxon>Hominidae</taxon>
        <taxon>Pongo</taxon>
    </lineage>
</organism>
<keyword id="KW-0007">Acetylation</keyword>
<keyword id="KW-1015">Disulfide bond</keyword>
<keyword id="KW-0443">Lipid metabolism</keyword>
<keyword id="KW-0456">Lyase</keyword>
<keyword id="KW-0479">Metal-binding</keyword>
<keyword id="KW-0496">Mitochondrion</keyword>
<keyword id="KW-0576">Peroxisome</keyword>
<keyword id="KW-1185">Reference proteome</keyword>
<keyword id="KW-0809">Transit peptide</keyword>
<sequence length="325" mass="34226">MAAMRKAVPRRLVGLASLRAVSTSSMGTLPKRVKIVEVGPRDGLQNEKNIVSTPVKIKLIDMLSEAGLSVIETTSFVSPKWVPQMGDHTEVLKGIQKFPGINYPVLTPNLKGFEAAVAAGAKEVAIFGAASELFTKKNINCSIEESFQRFDAILKAAQSANISVRGYVSCALGCPYEGKISPAKVAEVTKKLYSMGCYEISLGDTIGVGTPGIMKGMLSAVMQEVPLAALAVHCHDTYGQALANTLMALQMGVSVVDSSVAGLGGCPYAQGASGNLATEDLVYMLEGLGIHTGVNLQKLLEAGNFICQALNRKTSSKVAQATCKL</sequence>
<protein>
    <recommendedName>
        <fullName>Hydroxymethylglutaryl-CoA lyase, mitochondrial</fullName>
        <shortName>HL</shortName>
        <shortName>HMG-CoA lyase</shortName>
        <ecNumber evidence="2">4.1.3.4</ecNumber>
    </recommendedName>
    <alternativeName>
        <fullName>3-hydroxy-3-methylglutarate-CoA lyase</fullName>
    </alternativeName>
</protein>
<comment type="function">
    <text evidence="2">Mitochondrial 3-hydroxy-3-methylglutaryl-CoA lyase that catalyzes a cation-dependent cleavage of (S)-3-hydroxy-3-methylglutaryl-CoA into acetyl-CoA and acetoacetate, a key step in ketogenesis. Terminal step in leucine catabolism. Ketone bodies (beta-hydroxybutyrate, acetoacetate and acetone) are essential as an alternative source of energy to glucose, as lipid precursors and as regulators of metabolism.</text>
</comment>
<comment type="catalytic activity">
    <reaction evidence="2">
        <text>(3S)-3-hydroxy-3-methylglutaryl-CoA = acetoacetate + acetyl-CoA</text>
        <dbReference type="Rhea" id="RHEA:24404"/>
        <dbReference type="ChEBI" id="CHEBI:13705"/>
        <dbReference type="ChEBI" id="CHEBI:43074"/>
        <dbReference type="ChEBI" id="CHEBI:57288"/>
        <dbReference type="EC" id="4.1.3.4"/>
    </reaction>
</comment>
<comment type="pathway">
    <text>Metabolic intermediate metabolism; (S)-3-hydroxy-3-methylglutaryl-CoA degradation; acetoacetate from (S)-3-hydroxy-3-methylglutaryl-CoA: step 1/1.</text>
</comment>
<comment type="subunit">
    <text evidence="2">Homodimer; disulfide-linked. Can also form homotetramers.</text>
</comment>
<comment type="subcellular location">
    <subcellularLocation>
        <location evidence="3">Mitochondrion matrix</location>
    </subcellularLocation>
    <subcellularLocation>
        <location evidence="3">Peroxisome</location>
    </subcellularLocation>
    <text evidence="3">Unprocessed form is peroxisomal.</text>
</comment>
<comment type="similarity">
    <text evidence="7">Belongs to the HMG-CoA lyase family.</text>
</comment>
<name>HMGCL_PONAB</name>
<accession>Q5R9E1</accession>
<gene>
    <name type="primary">HMGCL</name>
</gene>
<evidence type="ECO:0000250" key="1"/>
<evidence type="ECO:0000250" key="2">
    <source>
        <dbReference type="UniProtKB" id="P35914"/>
    </source>
</evidence>
<evidence type="ECO:0000250" key="3">
    <source>
        <dbReference type="UniProtKB" id="P38060"/>
    </source>
</evidence>
<evidence type="ECO:0000255" key="4"/>
<evidence type="ECO:0000255" key="5">
    <source>
        <dbReference type="PROSITE-ProRule" id="PRU01151"/>
    </source>
</evidence>
<evidence type="ECO:0000255" key="6">
    <source>
        <dbReference type="PROSITE-ProRule" id="PRU10115"/>
    </source>
</evidence>
<evidence type="ECO:0000305" key="7"/>
<reference key="1">
    <citation type="submission" date="2004-11" db="EMBL/GenBank/DDBJ databases">
        <authorList>
            <consortium name="The German cDNA consortium"/>
        </authorList>
    </citation>
    <scope>NUCLEOTIDE SEQUENCE [LARGE SCALE MRNA]</scope>
    <source>
        <tissue>Kidney</tissue>
    </source>
</reference>
<feature type="transit peptide" description="Mitochondrion" evidence="1">
    <location>
        <begin position="1"/>
        <end position="27"/>
    </location>
</feature>
<feature type="chain" id="PRO_0000013481" description="Hydroxymethylglutaryl-CoA lyase, mitochondrial">
    <location>
        <begin position="28"/>
        <end position="325"/>
    </location>
</feature>
<feature type="domain" description="Pyruvate carboxyltransferase" evidence="5">
    <location>
        <begin position="33"/>
        <end position="300"/>
    </location>
</feature>
<feature type="short sequence motif" description="Microbody targeting signal" evidence="4">
    <location>
        <begin position="323"/>
        <end position="325"/>
    </location>
</feature>
<feature type="active site" evidence="6">
    <location>
        <position position="266"/>
    </location>
</feature>
<feature type="binding site" evidence="1">
    <location>
        <position position="41"/>
    </location>
    <ligand>
        <name>substrate</name>
    </ligand>
</feature>
<feature type="binding site" evidence="1">
    <location>
        <position position="42"/>
    </location>
    <ligand>
        <name>a divalent metal cation</name>
        <dbReference type="ChEBI" id="CHEBI:60240"/>
    </ligand>
</feature>
<feature type="binding site" evidence="1">
    <location>
        <position position="233"/>
    </location>
    <ligand>
        <name>a divalent metal cation</name>
        <dbReference type="ChEBI" id="CHEBI:60240"/>
    </ligand>
</feature>
<feature type="binding site" evidence="1">
    <location>
        <position position="235"/>
    </location>
    <ligand>
        <name>a divalent metal cation</name>
        <dbReference type="ChEBI" id="CHEBI:60240"/>
    </ligand>
</feature>
<feature type="binding site" evidence="1">
    <location>
        <position position="275"/>
    </location>
    <ligand>
        <name>a divalent metal cation</name>
        <dbReference type="ChEBI" id="CHEBI:60240"/>
    </ligand>
</feature>
<feature type="modified residue" description="N6-acetyllysine; alternate" evidence="2">
    <location>
        <position position="48"/>
    </location>
</feature>
<feature type="modified residue" description="N6-succinyllysine; alternate" evidence="3">
    <location>
        <position position="48"/>
    </location>
</feature>
<feature type="modified residue" description="N6-acetyllysine" evidence="3">
    <location>
        <position position="111"/>
    </location>
</feature>
<feature type="modified residue" description="N6-acetyllysine; alternate" evidence="3">
    <location>
        <position position="137"/>
    </location>
</feature>
<feature type="modified residue" description="N6-succinyllysine; alternate" evidence="3">
    <location>
        <position position="137"/>
    </location>
</feature>
<feature type="modified residue" description="N6-acetyllysine; alternate" evidence="3">
    <location>
        <position position="179"/>
    </location>
</feature>
<feature type="modified residue" description="N6-succinyllysine; alternate" evidence="3">
    <location>
        <position position="179"/>
    </location>
</feature>
<feature type="modified residue" description="N6-acetyllysine" evidence="3">
    <location>
        <position position="324"/>
    </location>
</feature>
<feature type="disulfide bond" description="Interchain" evidence="1">
    <location>
        <position position="323"/>
    </location>
</feature>
<proteinExistence type="evidence at transcript level"/>